<reference key="1">
    <citation type="journal article" date="1998" name="Nature">
        <title>The genome sequence of Rickettsia prowazekii and the origin of mitochondria.</title>
        <authorList>
            <person name="Andersson S.G.E."/>
            <person name="Zomorodipour A."/>
            <person name="Andersson J.O."/>
            <person name="Sicheritz-Ponten T."/>
            <person name="Alsmark U.C.M."/>
            <person name="Podowski R.M."/>
            <person name="Naeslund A.K."/>
            <person name="Eriksson A.-S."/>
            <person name="Winkler H.H."/>
            <person name="Kurland C.G."/>
        </authorList>
    </citation>
    <scope>NUCLEOTIDE SEQUENCE [LARGE SCALE GENOMIC DNA]</scope>
    <source>
        <strain>Madrid E</strain>
    </source>
</reference>
<reference key="2">
    <citation type="journal article" date="1997" name="Microbiology">
        <title>Genomic rearrangements during evolution of the obligate intracellular parasite Rickettsia prowazekii as inferred from an analysis of 52015 bp nucleotide sequence.</title>
        <authorList>
            <person name="Andersson J.O."/>
            <person name="Andersson S.G.E."/>
        </authorList>
    </citation>
    <scope>NUCLEOTIDE SEQUENCE [GENOMIC DNA] OF 1-96</scope>
    <source>
        <strain>Madrid E</strain>
    </source>
</reference>
<keyword id="KW-0067">ATP-binding</keyword>
<keyword id="KW-0131">Cell cycle</keyword>
<keyword id="KW-0132">Cell division</keyword>
<keyword id="KW-0133">Cell shape</keyword>
<keyword id="KW-0961">Cell wall biogenesis/degradation</keyword>
<keyword id="KW-0963">Cytoplasm</keyword>
<keyword id="KW-0436">Ligase</keyword>
<keyword id="KW-0547">Nucleotide-binding</keyword>
<keyword id="KW-0573">Peptidoglycan synthesis</keyword>
<keyword id="KW-1185">Reference proteome</keyword>
<proteinExistence type="inferred from homology"/>
<comment type="function">
    <text evidence="1">Involved in cell wall formation. Catalyzes the final step in the synthesis of UDP-N-acetylmuramoyl-pentapeptide, the precursor of murein.</text>
</comment>
<comment type="catalytic activity">
    <reaction evidence="1">
        <text>D-alanyl-D-alanine + UDP-N-acetyl-alpha-D-muramoyl-L-alanyl-gamma-D-glutamyl-meso-2,6-diaminopimelate + ATP = UDP-N-acetyl-alpha-D-muramoyl-L-alanyl-gamma-D-glutamyl-meso-2,6-diaminopimeloyl-D-alanyl-D-alanine + ADP + phosphate + H(+)</text>
        <dbReference type="Rhea" id="RHEA:28374"/>
        <dbReference type="ChEBI" id="CHEBI:15378"/>
        <dbReference type="ChEBI" id="CHEBI:30616"/>
        <dbReference type="ChEBI" id="CHEBI:43474"/>
        <dbReference type="ChEBI" id="CHEBI:57822"/>
        <dbReference type="ChEBI" id="CHEBI:61386"/>
        <dbReference type="ChEBI" id="CHEBI:83905"/>
        <dbReference type="ChEBI" id="CHEBI:456216"/>
        <dbReference type="EC" id="6.3.2.10"/>
    </reaction>
</comment>
<comment type="pathway">
    <text evidence="1">Cell wall biogenesis; peptidoglycan biosynthesis.</text>
</comment>
<comment type="subcellular location">
    <subcellularLocation>
        <location evidence="1">Cytoplasm</location>
    </subcellularLocation>
</comment>
<comment type="similarity">
    <text evidence="1">Belongs to the MurCDEF family. MurF subfamily.</text>
</comment>
<sequence>MIWNSKTLSIALGIEISNSVNCNEVQFNSKDVKKGDLFIALQGNRDGHDYIQDAIDKGATAVIVSKQVEINDKDKIILVNNSFEALQKMALYKRENSKAKFIAITGSVGKTSTKEALKILLQHDFIVFASRGNFNNYLGLLINLASMADDTEYAIFELGMNHQGEISELVQILKPNIAMINNISEAHLEFFHSLEEIAEAKCEIFKNFSKNDIAIINASNNCYNKILSILKNLSITNIYSFGHSSKASAKLILYKTLGEQVHLQYYINNKFIDITIPFIPRHFANNYTGVLLIIDILGKDIEISAKYLADIALTKGRGKIINIQNSRVICDYYNASPQSMKAALEYLKQVPADNKTSIIGEMLELGWNSQRLHEELVPYILDAGCTKVYLVGAYTKYIYDLLPNKISKKFFKNVEELITHITDLFEYSELILIKGSRGVKLDKIVDYYQ</sequence>
<protein>
    <recommendedName>
        <fullName evidence="1">UDP-N-acetylmuramoyl-tripeptide--D-alanyl-D-alanine ligase</fullName>
        <ecNumber evidence="1">6.3.2.10</ecNumber>
    </recommendedName>
    <alternativeName>
        <fullName evidence="1">D-alanyl-D-alanine-adding enzyme</fullName>
    </alternativeName>
    <alternativeName>
        <fullName>UDP-MurNAc-pentapeptide synthetase</fullName>
    </alternativeName>
</protein>
<name>MURF_RICPR</name>
<feature type="chain" id="PRO_0000101704" description="UDP-N-acetylmuramoyl-tripeptide--D-alanyl-D-alanine ligase">
    <location>
        <begin position="1"/>
        <end position="449"/>
    </location>
</feature>
<feature type="binding site" evidence="1">
    <location>
        <begin position="106"/>
        <end position="112"/>
    </location>
    <ligand>
        <name>ATP</name>
        <dbReference type="ChEBI" id="CHEBI:30616"/>
    </ligand>
</feature>
<gene>
    <name evidence="1" type="primary">murF</name>
    <name type="ordered locus">RP596</name>
</gene>
<accession>O05953</accession>
<organism>
    <name type="scientific">Rickettsia prowazekii (strain Madrid E)</name>
    <dbReference type="NCBI Taxonomy" id="272947"/>
    <lineage>
        <taxon>Bacteria</taxon>
        <taxon>Pseudomonadati</taxon>
        <taxon>Pseudomonadota</taxon>
        <taxon>Alphaproteobacteria</taxon>
        <taxon>Rickettsiales</taxon>
        <taxon>Rickettsiaceae</taxon>
        <taxon>Rickettsieae</taxon>
        <taxon>Rickettsia</taxon>
        <taxon>typhus group</taxon>
    </lineage>
</organism>
<dbReference type="EC" id="6.3.2.10" evidence="1"/>
<dbReference type="EMBL" id="AJ235272">
    <property type="protein sequence ID" value="CAA15040.1"/>
    <property type="molecule type" value="Genomic_DNA"/>
</dbReference>
<dbReference type="EMBL" id="Y11783">
    <property type="protein sequence ID" value="CAA72472.1"/>
    <property type="molecule type" value="Genomic_DNA"/>
</dbReference>
<dbReference type="PIR" id="F71664">
    <property type="entry name" value="F71664"/>
</dbReference>
<dbReference type="RefSeq" id="NP_220964.1">
    <property type="nucleotide sequence ID" value="NC_000963.1"/>
</dbReference>
<dbReference type="RefSeq" id="WP_004597930.1">
    <property type="nucleotide sequence ID" value="NC_000963.1"/>
</dbReference>
<dbReference type="SMR" id="O05953"/>
<dbReference type="STRING" id="272947.gene:17555675"/>
<dbReference type="EnsemblBacteria" id="CAA15040">
    <property type="protein sequence ID" value="CAA15040"/>
    <property type="gene ID" value="CAA15040"/>
</dbReference>
<dbReference type="KEGG" id="rpr:RP596"/>
<dbReference type="PATRIC" id="fig|272947.5.peg.614"/>
<dbReference type="eggNOG" id="COG0770">
    <property type="taxonomic scope" value="Bacteria"/>
</dbReference>
<dbReference type="HOGENOM" id="CLU_031507_4_1_5"/>
<dbReference type="OrthoDB" id="9800958at2"/>
<dbReference type="UniPathway" id="UPA00219"/>
<dbReference type="Proteomes" id="UP000002480">
    <property type="component" value="Chromosome"/>
</dbReference>
<dbReference type="GO" id="GO:0005737">
    <property type="term" value="C:cytoplasm"/>
    <property type="evidence" value="ECO:0007669"/>
    <property type="project" value="UniProtKB-SubCell"/>
</dbReference>
<dbReference type="GO" id="GO:0005524">
    <property type="term" value="F:ATP binding"/>
    <property type="evidence" value="ECO:0007669"/>
    <property type="project" value="UniProtKB-UniRule"/>
</dbReference>
<dbReference type="GO" id="GO:0047480">
    <property type="term" value="F:UDP-N-acetylmuramoyl-tripeptide-D-alanyl-D-alanine ligase activity"/>
    <property type="evidence" value="ECO:0007669"/>
    <property type="project" value="UniProtKB-UniRule"/>
</dbReference>
<dbReference type="GO" id="GO:0008766">
    <property type="term" value="F:UDP-N-acetylmuramoylalanyl-D-glutamyl-2,6-diaminopimelate-D-alanyl-D-alanine ligase activity"/>
    <property type="evidence" value="ECO:0007669"/>
    <property type="project" value="RHEA"/>
</dbReference>
<dbReference type="GO" id="GO:0051301">
    <property type="term" value="P:cell division"/>
    <property type="evidence" value="ECO:0007669"/>
    <property type="project" value="UniProtKB-KW"/>
</dbReference>
<dbReference type="GO" id="GO:0071555">
    <property type="term" value="P:cell wall organization"/>
    <property type="evidence" value="ECO:0007669"/>
    <property type="project" value="UniProtKB-KW"/>
</dbReference>
<dbReference type="GO" id="GO:0009252">
    <property type="term" value="P:peptidoglycan biosynthetic process"/>
    <property type="evidence" value="ECO:0007669"/>
    <property type="project" value="UniProtKB-UniRule"/>
</dbReference>
<dbReference type="GO" id="GO:0008360">
    <property type="term" value="P:regulation of cell shape"/>
    <property type="evidence" value="ECO:0007669"/>
    <property type="project" value="UniProtKB-KW"/>
</dbReference>
<dbReference type="Gene3D" id="3.90.190.20">
    <property type="entry name" value="Mur ligase, C-terminal domain"/>
    <property type="match status" value="1"/>
</dbReference>
<dbReference type="Gene3D" id="3.40.1190.10">
    <property type="entry name" value="Mur-like, catalytic domain"/>
    <property type="match status" value="1"/>
</dbReference>
<dbReference type="Gene3D" id="3.40.1390.10">
    <property type="entry name" value="MurE/MurF, N-terminal domain"/>
    <property type="match status" value="1"/>
</dbReference>
<dbReference type="HAMAP" id="MF_02019">
    <property type="entry name" value="MurF"/>
    <property type="match status" value="1"/>
</dbReference>
<dbReference type="InterPro" id="IPR036565">
    <property type="entry name" value="Mur-like_cat_sf"/>
</dbReference>
<dbReference type="InterPro" id="IPR004101">
    <property type="entry name" value="Mur_ligase_C"/>
</dbReference>
<dbReference type="InterPro" id="IPR036615">
    <property type="entry name" value="Mur_ligase_C_dom_sf"/>
</dbReference>
<dbReference type="InterPro" id="IPR013221">
    <property type="entry name" value="Mur_ligase_cen"/>
</dbReference>
<dbReference type="InterPro" id="IPR000713">
    <property type="entry name" value="Mur_ligase_N"/>
</dbReference>
<dbReference type="InterPro" id="IPR051046">
    <property type="entry name" value="MurCDEF_CellWall_CoF430Synth"/>
</dbReference>
<dbReference type="InterPro" id="IPR035911">
    <property type="entry name" value="MurE/MurF_N"/>
</dbReference>
<dbReference type="InterPro" id="IPR005863">
    <property type="entry name" value="UDP-N-AcMur_synth"/>
</dbReference>
<dbReference type="NCBIfam" id="TIGR01143">
    <property type="entry name" value="murF"/>
    <property type="match status" value="1"/>
</dbReference>
<dbReference type="PANTHER" id="PTHR43024">
    <property type="entry name" value="UDP-N-ACETYLMURAMOYL-TRIPEPTIDE--D-ALANYL-D-ALANINE LIGASE"/>
    <property type="match status" value="1"/>
</dbReference>
<dbReference type="PANTHER" id="PTHR43024:SF1">
    <property type="entry name" value="UDP-N-ACETYLMURAMOYL-TRIPEPTIDE--D-ALANYL-D-ALANINE LIGASE"/>
    <property type="match status" value="1"/>
</dbReference>
<dbReference type="Pfam" id="PF01225">
    <property type="entry name" value="Mur_ligase"/>
    <property type="match status" value="1"/>
</dbReference>
<dbReference type="Pfam" id="PF02875">
    <property type="entry name" value="Mur_ligase_C"/>
    <property type="match status" value="1"/>
</dbReference>
<dbReference type="Pfam" id="PF08245">
    <property type="entry name" value="Mur_ligase_M"/>
    <property type="match status" value="1"/>
</dbReference>
<dbReference type="SUPFAM" id="SSF53623">
    <property type="entry name" value="MurD-like peptide ligases, catalytic domain"/>
    <property type="match status" value="1"/>
</dbReference>
<dbReference type="SUPFAM" id="SSF53244">
    <property type="entry name" value="MurD-like peptide ligases, peptide-binding domain"/>
    <property type="match status" value="1"/>
</dbReference>
<dbReference type="SUPFAM" id="SSF63418">
    <property type="entry name" value="MurE/MurF N-terminal domain"/>
    <property type="match status" value="1"/>
</dbReference>
<evidence type="ECO:0000255" key="1">
    <source>
        <dbReference type="HAMAP-Rule" id="MF_02019"/>
    </source>
</evidence>